<gene>
    <name evidence="3" type="primary">FPPS</name>
</gene>
<feature type="chain" id="PRO_0000455290" description="Farnesyl pyrophosphate synthase">
    <location>
        <begin position="1"/>
        <end position="403"/>
    </location>
</feature>
<feature type="short sequence motif" description="DDXXD motif" evidence="4">
    <location>
        <begin position="156"/>
        <end position="160"/>
    </location>
</feature>
<feature type="binding site" evidence="1">
    <location>
        <position position="156"/>
    </location>
    <ligand>
        <name>Mg(2+)</name>
        <dbReference type="ChEBI" id="CHEBI:18420"/>
        <label>1</label>
    </ligand>
</feature>
<feature type="binding site" evidence="1">
    <location>
        <position position="156"/>
    </location>
    <ligand>
        <name>Mg(2+)</name>
        <dbReference type="ChEBI" id="CHEBI:18420"/>
        <label>2</label>
    </ligand>
</feature>
<feature type="binding site" evidence="1">
    <location>
        <position position="160"/>
    </location>
    <ligand>
        <name>Mg(2+)</name>
        <dbReference type="ChEBI" id="CHEBI:18420"/>
        <label>1</label>
    </ligand>
</feature>
<feature type="binding site" evidence="1">
    <location>
        <position position="160"/>
    </location>
    <ligand>
        <name>Mg(2+)</name>
        <dbReference type="ChEBI" id="CHEBI:18420"/>
        <label>2</label>
    </ligand>
</feature>
<protein>
    <recommendedName>
        <fullName evidence="4">Farnesyl pyrophosphate synthase</fullName>
        <shortName evidence="3">NvFPPS</shortName>
        <shortName evidence="3">NvIDS2</shortName>
        <ecNumber evidence="2">2.5.1.68</ecNumber>
    </recommendedName>
    <alternativeName>
        <fullName evidence="3">Farnesyl diphosphate synthase</fullName>
    </alternativeName>
</protein>
<accession>A0A386JVA3</accession>
<proteinExistence type="evidence at protein level"/>
<keyword id="KW-0414">Isoprene biosynthesis</keyword>
<keyword id="KW-0460">Magnesium</keyword>
<keyword id="KW-0479">Metal-binding</keyword>
<keyword id="KW-0808">Transferase</keyword>
<reference key="1">
    <citation type="journal article" date="2019" name="J. Chem. Ecol.">
        <title>An IDS-type sesquiterpene synthase produces the pheromone precursor (z)-alpha-bisabolene in Nezara viridula.</title>
        <authorList>
            <person name="Lancaster J."/>
            <person name="Lehner B."/>
            <person name="Khrimian A."/>
            <person name="Muchlinski A."/>
            <person name="Luck K."/>
            <person name="Koellner T.G."/>
            <person name="Weber D.C."/>
            <person name="Gundersen-Rindal D.E."/>
            <person name="Tholl D."/>
        </authorList>
    </citation>
    <scope>NUCLEOTIDE SEQUENCE [MRNA]</scope>
    <scope>FUNCTION</scope>
    <scope>CATALYTIC ACTIVITY</scope>
    <scope>PATHWAY</scope>
</reference>
<name>FPPS_NEZVI</name>
<evidence type="ECO:0000250" key="1">
    <source>
        <dbReference type="UniProtKB" id="P14324"/>
    </source>
</evidence>
<evidence type="ECO:0000269" key="2">
    <source>
    </source>
</evidence>
<evidence type="ECO:0000303" key="3">
    <source>
    </source>
</evidence>
<evidence type="ECO:0000305" key="4"/>
<organism>
    <name type="scientific">Nezara viridula</name>
    <name type="common">Southern green stink bug</name>
    <name type="synonym">Cimex viridulus</name>
    <dbReference type="NCBI Taxonomy" id="85310"/>
    <lineage>
        <taxon>Eukaryota</taxon>
        <taxon>Metazoa</taxon>
        <taxon>Ecdysozoa</taxon>
        <taxon>Arthropoda</taxon>
        <taxon>Hexapoda</taxon>
        <taxon>Insecta</taxon>
        <taxon>Pterygota</taxon>
        <taxon>Neoptera</taxon>
        <taxon>Paraneoptera</taxon>
        <taxon>Hemiptera</taxon>
        <taxon>Heteroptera</taxon>
        <taxon>Panheteroptera</taxon>
        <taxon>Pentatomomorpha</taxon>
        <taxon>Pentatomoidea</taxon>
        <taxon>Pentatomidae</taxon>
        <taxon>Pentatominae</taxon>
        <taxon>Nezara</taxon>
    </lineage>
</organism>
<sequence>MPLAKLCAKKLSSPLMKLCYPNLNGKLPFSNLSNILDNSSLKFHSCNPHITCRGLSTVALRPQTITKDDKRDFMAVFPDIVRDLTQLNPGISDLSTLISKIMQYNVSGGKKVRGLTVVYSYRMLAPDHALTPENIRLAQILGWCVEMLQGFFLVIDDLADQSITRRGRPCWYRNPDVGLRAGSDALLIQSGTFQLLQQHCKDREFYIDLVELFLDAVRRTTYGQTLDHVSSFPNITHLTMDRYNFITKYKTSYYTFHLPVATAMYMAGIYNTELHRQAKSVLLEMGHYFQVQDDYLDVFGDEEVIGKIGTDIQEGKCTWLAIVAFQRASPSQREILESCYGSKDPEKIKKVKDTFIEIGVPAVFHAYEEETYNLITRQIQQLSQGLPHELFLTLLHKTYGRKQ</sequence>
<comment type="function">
    <text evidence="2">Farnesyl pyrophosphate synthase involved in pheromone biosynthesis by catalyzing the formation of (2Z,6E)-farnesyl diphosphate.</text>
</comment>
<comment type="catalytic activity">
    <reaction evidence="2">
        <text>isopentenyl diphosphate + (2E)-geranyl diphosphate = (2Z,6E)-farnesyl diphosphate + diphosphate</text>
        <dbReference type="Rhea" id="RHEA:23300"/>
        <dbReference type="ChEBI" id="CHEBI:33019"/>
        <dbReference type="ChEBI" id="CHEBI:58057"/>
        <dbReference type="ChEBI" id="CHEBI:128769"/>
        <dbReference type="ChEBI" id="CHEBI:162247"/>
        <dbReference type="EC" id="2.5.1.68"/>
    </reaction>
</comment>
<comment type="cofactor">
    <cofactor evidence="1">
        <name>Mg(2+)</name>
        <dbReference type="ChEBI" id="CHEBI:18420"/>
    </cofactor>
    <text evidence="1">Binds 2 Mg(2+) ions per subunit.</text>
</comment>
<comment type="pathway">
    <text evidence="2">Pheromone biosynthesis.</text>
</comment>
<comment type="domain">
    <text evidence="4">The Asp-Asp-Xaa-Xaa-Asp/Glu (DDXXD/E) motif is important for the catalytic activity, presumably through binding to Mg(2+).</text>
</comment>
<comment type="similarity">
    <text evidence="4">Belongs to the FPP/GGPP synthase family.</text>
</comment>
<dbReference type="EC" id="2.5.1.68" evidence="2"/>
<dbReference type="EMBL" id="MG748544">
    <property type="protein sequence ID" value="AYD76070.1"/>
    <property type="molecule type" value="mRNA"/>
</dbReference>
<dbReference type="SMR" id="A0A386JVA3"/>
<dbReference type="OrthoDB" id="10257492at2759"/>
<dbReference type="GO" id="GO:0005737">
    <property type="term" value="C:cytoplasm"/>
    <property type="evidence" value="ECO:0007669"/>
    <property type="project" value="TreeGrafter"/>
</dbReference>
<dbReference type="GO" id="GO:0004337">
    <property type="term" value="F:(2E,6E)-farnesyl diphosphate synthase activity"/>
    <property type="evidence" value="ECO:0007669"/>
    <property type="project" value="TreeGrafter"/>
</dbReference>
<dbReference type="GO" id="GO:0004161">
    <property type="term" value="F:dimethylallyltranstransferase activity"/>
    <property type="evidence" value="ECO:0007669"/>
    <property type="project" value="TreeGrafter"/>
</dbReference>
<dbReference type="GO" id="GO:0046872">
    <property type="term" value="F:metal ion binding"/>
    <property type="evidence" value="ECO:0007669"/>
    <property type="project" value="UniProtKB-KW"/>
</dbReference>
<dbReference type="GO" id="GO:0033850">
    <property type="term" value="F:Z-farnesyl diphosphate synthase activity"/>
    <property type="evidence" value="ECO:0000314"/>
    <property type="project" value="UniProtKB"/>
</dbReference>
<dbReference type="GO" id="GO:0045337">
    <property type="term" value="P:farnesyl diphosphate biosynthetic process"/>
    <property type="evidence" value="ECO:0007669"/>
    <property type="project" value="TreeGrafter"/>
</dbReference>
<dbReference type="GO" id="GO:0008299">
    <property type="term" value="P:isoprenoid biosynthetic process"/>
    <property type="evidence" value="ECO:0000314"/>
    <property type="project" value="UniProtKB"/>
</dbReference>
<dbReference type="GO" id="GO:0042811">
    <property type="term" value="P:pheromone biosynthetic process"/>
    <property type="evidence" value="ECO:0000314"/>
    <property type="project" value="UniProtKB"/>
</dbReference>
<dbReference type="CDD" id="cd00685">
    <property type="entry name" value="Trans_IPPS_HT"/>
    <property type="match status" value="1"/>
</dbReference>
<dbReference type="FunFam" id="1.10.600.10:FF:000021">
    <property type="entry name" value="Farnesyl pyrophosphate synthase"/>
    <property type="match status" value="1"/>
</dbReference>
<dbReference type="Gene3D" id="1.10.600.10">
    <property type="entry name" value="Farnesyl Diphosphate Synthase"/>
    <property type="match status" value="1"/>
</dbReference>
<dbReference type="InterPro" id="IPR039702">
    <property type="entry name" value="FPS1-like"/>
</dbReference>
<dbReference type="InterPro" id="IPR008949">
    <property type="entry name" value="Isoprenoid_synthase_dom_sf"/>
</dbReference>
<dbReference type="InterPro" id="IPR000092">
    <property type="entry name" value="Polyprenyl_synt"/>
</dbReference>
<dbReference type="InterPro" id="IPR033749">
    <property type="entry name" value="Polyprenyl_synt_CS"/>
</dbReference>
<dbReference type="PANTHER" id="PTHR11525:SF0">
    <property type="entry name" value="FARNESYL PYROPHOSPHATE SYNTHASE"/>
    <property type="match status" value="1"/>
</dbReference>
<dbReference type="PANTHER" id="PTHR11525">
    <property type="entry name" value="FARNESYL-PYROPHOSPHATE SYNTHETASE"/>
    <property type="match status" value="1"/>
</dbReference>
<dbReference type="Pfam" id="PF00348">
    <property type="entry name" value="polyprenyl_synt"/>
    <property type="match status" value="1"/>
</dbReference>
<dbReference type="SFLD" id="SFLDS00005">
    <property type="entry name" value="Isoprenoid_Synthase_Type_I"/>
    <property type="match status" value="1"/>
</dbReference>
<dbReference type="SFLD" id="SFLDG01017">
    <property type="entry name" value="Polyprenyl_Transferase_Like"/>
    <property type="match status" value="1"/>
</dbReference>
<dbReference type="SUPFAM" id="SSF48576">
    <property type="entry name" value="Terpenoid synthases"/>
    <property type="match status" value="1"/>
</dbReference>
<dbReference type="PROSITE" id="PS00723">
    <property type="entry name" value="POLYPRENYL_SYNTHASE_1"/>
    <property type="match status" value="1"/>
</dbReference>
<dbReference type="PROSITE" id="PS00444">
    <property type="entry name" value="POLYPRENYL_SYNTHASE_2"/>
    <property type="match status" value="1"/>
</dbReference>